<proteinExistence type="evidence at protein level"/>
<evidence type="ECO:0000305" key="1"/>
<sequence length="27" mass="2955">MIINHNMSAINANRVLGBTNADITKDL</sequence>
<name>FLA4_SPIAU</name>
<feature type="chain" id="PRO_0000182631" description="Flagellar filament 31.5 kDa core protein">
    <location>
        <begin position="1"/>
        <end position="27" status="greater than"/>
    </location>
</feature>
<feature type="non-terminal residue">
    <location>
        <position position="27"/>
    </location>
</feature>
<keyword id="KW-0975">Bacterial flagellum</keyword>
<keyword id="KW-0903">Direct protein sequencing</keyword>
<keyword id="KW-0574">Periplasm</keyword>
<protein>
    <recommendedName>
        <fullName>Flagellar filament 31.5 kDa core protein</fullName>
    </recommendedName>
    <alternativeName>
        <fullName>31.5 kDa major core flagellin</fullName>
    </alternativeName>
</protein>
<comment type="function">
    <text>Component of the core of the flagella.</text>
</comment>
<comment type="subunit">
    <text>The flagellum consists of an outer layer composed of repeating units of FlaA around a core that contains one or all of five antigenically related polypeptides.</text>
</comment>
<comment type="subcellular location">
    <subcellularLocation>
        <location>Periplasmic flagellum</location>
    </subcellularLocation>
    <subcellularLocation>
        <location>Periplasm</location>
    </subcellularLocation>
</comment>
<comment type="similarity">
    <text evidence="1">Belongs to the bacterial flagellin family.</text>
</comment>
<reference key="1">
    <citation type="journal article" date="1991" name="J. Bacteriol.">
        <title>N-terminal amino acid sequences and amino acid compositions of the Spirochaeta aurantia flagellar filament polypeptides.</title>
        <authorList>
            <person name="Parales J. Jr."/>
            <person name="Greenberg E.P."/>
        </authorList>
    </citation>
    <scope>PROTEIN SEQUENCE</scope>
    <source>
        <strain>M1</strain>
    </source>
</reference>
<organism>
    <name type="scientific">Spirochaeta aurantia</name>
    <dbReference type="NCBI Taxonomy" id="147"/>
    <lineage>
        <taxon>Bacteria</taxon>
        <taxon>Pseudomonadati</taxon>
        <taxon>Spirochaetota</taxon>
        <taxon>Spirochaetia</taxon>
        <taxon>Spirochaetales</taxon>
        <taxon>Spirochaetaceae</taxon>
        <taxon>Spirochaeta</taxon>
    </lineage>
</organism>
<accession>P21987</accession>
<dbReference type="GO" id="GO:0055040">
    <property type="term" value="C:periplasmic flagellum"/>
    <property type="evidence" value="ECO:0007669"/>
    <property type="project" value="UniProtKB-SubCell"/>
</dbReference>